<evidence type="ECO:0000250" key="1"/>
<evidence type="ECO:0000250" key="2">
    <source>
        <dbReference type="UniProtKB" id="P11959"/>
    </source>
</evidence>
<evidence type="ECO:0000255" key="3"/>
<evidence type="ECO:0000269" key="4">
    <source>
    </source>
</evidence>
<evidence type="ECO:0000305" key="5"/>
<evidence type="ECO:0000312" key="6">
    <source>
        <dbReference type="EMBL" id="CAO77701.1"/>
    </source>
</evidence>
<sequence>MKTYDLIVIGTGPGGYPAAIRGAQLGLKVLAVEAAEVGGVCLNVGCIPTKALLHAAETVHHLKGAEGFGLKAKPELDLKKLGAWRDGVVKKLTGGVAGLLKGNKVELLRGFARFKGPREIEVNGETYGAQSFIIATGSEPMPLKGFPFGEDVWDSTRALRVEEGIPKRLLVIGGGAVGLELGQIYHRLGSEVTLIEYMPEILPAGDRETAALLRKALEKEGLKVRTGTKAVGYEKKQDGLHVLLEAAQGGSQEEIVVDKILVAVGRRPRTEGLGLEKAGVKVDERGFIQVNARMETSAPGVYAIGDVARPPLLAHKAMKEGLVAAENAAGKNALFDFQVPSVVYTGPEWAGVGLTEEEARKAGYNVKVGKFPFSASGRALTLGGAEGLIKVVGDAETDLLLGVFVVGPQAGELIAEATLALEMGATVSDLGLTIHPHPTLSEGLMEAAEALHKQAIHILNR</sequence>
<organism>
    <name type="scientific">Thermus scotoductus (strain ATCC 700910 / SA-01)</name>
    <dbReference type="NCBI Taxonomy" id="743525"/>
    <lineage>
        <taxon>Bacteria</taxon>
        <taxon>Thermotogati</taxon>
        <taxon>Deinococcota</taxon>
        <taxon>Deinococci</taxon>
        <taxon>Thermales</taxon>
        <taxon>Thermaceae</taxon>
        <taxon>Thermus</taxon>
    </lineage>
</organism>
<dbReference type="EC" id="1.8.1.4"/>
<dbReference type="EMBL" id="AM749392">
    <property type="protein sequence ID" value="CAO77701.1"/>
    <property type="status" value="ALT_INIT"/>
    <property type="molecule type" value="Genomic_DNA"/>
</dbReference>
<dbReference type="EMBL" id="CP001962">
    <property type="protein sequence ID" value="ADW20875.1"/>
    <property type="molecule type" value="Genomic_DNA"/>
</dbReference>
<dbReference type="RefSeq" id="WP_015716160.1">
    <property type="nucleotide sequence ID" value="NC_014974.1"/>
</dbReference>
<dbReference type="SMR" id="P85207"/>
<dbReference type="STRING" id="743525.TSC_c02350"/>
<dbReference type="KEGG" id="tsc:TSC_c02350"/>
<dbReference type="eggNOG" id="COG1249">
    <property type="taxonomic scope" value="Bacteria"/>
</dbReference>
<dbReference type="HOGENOM" id="CLU_016755_0_3_0"/>
<dbReference type="SABIO-RK" id="P85207"/>
<dbReference type="Proteomes" id="UP000008087">
    <property type="component" value="Chromosome"/>
</dbReference>
<dbReference type="GO" id="GO:0016020">
    <property type="term" value="C:membrane"/>
    <property type="evidence" value="ECO:0007669"/>
    <property type="project" value="UniProtKB-SubCell"/>
</dbReference>
<dbReference type="GO" id="GO:0004148">
    <property type="term" value="F:dihydrolipoyl dehydrogenase (NADH) activity"/>
    <property type="evidence" value="ECO:0007669"/>
    <property type="project" value="UniProtKB-EC"/>
</dbReference>
<dbReference type="GO" id="GO:0050660">
    <property type="term" value="F:flavin adenine dinucleotide binding"/>
    <property type="evidence" value="ECO:0007669"/>
    <property type="project" value="InterPro"/>
</dbReference>
<dbReference type="GO" id="GO:0006103">
    <property type="term" value="P:2-oxoglutarate metabolic process"/>
    <property type="evidence" value="ECO:0007669"/>
    <property type="project" value="TreeGrafter"/>
</dbReference>
<dbReference type="FunFam" id="3.30.390.30:FF:000001">
    <property type="entry name" value="Dihydrolipoyl dehydrogenase"/>
    <property type="match status" value="1"/>
</dbReference>
<dbReference type="Gene3D" id="3.30.390.30">
    <property type="match status" value="1"/>
</dbReference>
<dbReference type="Gene3D" id="3.50.50.60">
    <property type="entry name" value="FAD/NAD(P)-binding domain"/>
    <property type="match status" value="2"/>
</dbReference>
<dbReference type="InterPro" id="IPR050151">
    <property type="entry name" value="Class-I_Pyr_Nuc-Dis_Oxidored"/>
</dbReference>
<dbReference type="InterPro" id="IPR036188">
    <property type="entry name" value="FAD/NAD-bd_sf"/>
</dbReference>
<dbReference type="InterPro" id="IPR023753">
    <property type="entry name" value="FAD/NAD-binding_dom"/>
</dbReference>
<dbReference type="InterPro" id="IPR016156">
    <property type="entry name" value="FAD/NAD-linked_Rdtase_dimer_sf"/>
</dbReference>
<dbReference type="InterPro" id="IPR006258">
    <property type="entry name" value="Lipoamide_DH"/>
</dbReference>
<dbReference type="InterPro" id="IPR001100">
    <property type="entry name" value="Pyr_nuc-diS_OxRdtase"/>
</dbReference>
<dbReference type="InterPro" id="IPR004099">
    <property type="entry name" value="Pyr_nucl-diS_OxRdtase_dimer"/>
</dbReference>
<dbReference type="InterPro" id="IPR012999">
    <property type="entry name" value="Pyr_OxRdtase_I_AS"/>
</dbReference>
<dbReference type="NCBIfam" id="TIGR01350">
    <property type="entry name" value="lipoamide_DH"/>
    <property type="match status" value="1"/>
</dbReference>
<dbReference type="PANTHER" id="PTHR22912:SF160">
    <property type="entry name" value="DIHYDROLIPOYL DEHYDROGENASE"/>
    <property type="match status" value="1"/>
</dbReference>
<dbReference type="PANTHER" id="PTHR22912">
    <property type="entry name" value="DISULFIDE OXIDOREDUCTASE"/>
    <property type="match status" value="1"/>
</dbReference>
<dbReference type="Pfam" id="PF07992">
    <property type="entry name" value="Pyr_redox_2"/>
    <property type="match status" value="1"/>
</dbReference>
<dbReference type="Pfam" id="PF02852">
    <property type="entry name" value="Pyr_redox_dim"/>
    <property type="match status" value="1"/>
</dbReference>
<dbReference type="PIRSF" id="PIRSF000350">
    <property type="entry name" value="Mercury_reductase_MerA"/>
    <property type="match status" value="1"/>
</dbReference>
<dbReference type="PRINTS" id="PR00368">
    <property type="entry name" value="FADPNR"/>
</dbReference>
<dbReference type="PRINTS" id="PR00411">
    <property type="entry name" value="PNDRDTASEI"/>
</dbReference>
<dbReference type="SUPFAM" id="SSF51905">
    <property type="entry name" value="FAD/NAD(P)-binding domain"/>
    <property type="match status" value="1"/>
</dbReference>
<dbReference type="SUPFAM" id="SSF55424">
    <property type="entry name" value="FAD/NAD-linked reductases, dimerisation (C-terminal) domain"/>
    <property type="match status" value="1"/>
</dbReference>
<dbReference type="PROSITE" id="PS00076">
    <property type="entry name" value="PYRIDINE_REDOX_1"/>
    <property type="match status" value="1"/>
</dbReference>
<proteinExistence type="evidence at protein level"/>
<protein>
    <recommendedName>
        <fullName>Dihydrolipoyl dehydrogenase</fullName>
        <ecNumber>1.8.1.4</ecNumber>
    </recommendedName>
    <alternativeName>
        <fullName>Dihydrolipoamide dehydrogenase</fullName>
    </alternativeName>
</protein>
<comment type="function">
    <text evidence="4">Has chromate reductase activity.</text>
</comment>
<comment type="catalytic activity">
    <reaction evidence="2">
        <text>N(6)-[(R)-dihydrolipoyl]-L-lysyl-[protein] + NAD(+) = N(6)-[(R)-lipoyl]-L-lysyl-[protein] + NADH + H(+)</text>
        <dbReference type="Rhea" id="RHEA:15045"/>
        <dbReference type="Rhea" id="RHEA-COMP:10474"/>
        <dbReference type="Rhea" id="RHEA-COMP:10475"/>
        <dbReference type="ChEBI" id="CHEBI:15378"/>
        <dbReference type="ChEBI" id="CHEBI:57540"/>
        <dbReference type="ChEBI" id="CHEBI:57945"/>
        <dbReference type="ChEBI" id="CHEBI:83099"/>
        <dbReference type="ChEBI" id="CHEBI:83100"/>
        <dbReference type="EC" id="1.8.1.4"/>
    </reaction>
</comment>
<comment type="cofactor">
    <cofactor evidence="4">
        <name>FAD</name>
        <dbReference type="ChEBI" id="CHEBI:57692"/>
    </cofactor>
    <text evidence="4">Binds 1 FAD per subunit.</text>
</comment>
<comment type="biophysicochemical properties">
    <kinetics>
        <KM evidence="4">55.46 uM for Cr(VI)</KM>
        <Vmax evidence="4">2.262 umol/min/mg enzyme toward Cr(VI)</Vmax>
    </kinetics>
    <phDependence>
        <text evidence="4">Optimum pH is 6.5.</text>
    </phDependence>
    <temperatureDependence>
        <text evidence="4">Optimum temperature is 65 degrees Celsius.</text>
    </temperatureDependence>
</comment>
<comment type="subunit">
    <text evidence="2">Homodimer.</text>
</comment>
<comment type="subcellular location">
    <subcellularLocation>
        <location evidence="4">Membrane</location>
        <topology evidence="4">Peripheral membrane protein</topology>
    </subcellularLocation>
</comment>
<comment type="miscellaneous">
    <text evidence="2">The active site is a redox-active disulfide bond.</text>
</comment>
<comment type="similarity">
    <text evidence="3">Belongs to the class-I pyridine nucleotide-disulfide oxidoreductase family.</text>
</comment>
<comment type="sequence caution" evidence="5">
    <conflict type="erroneous initiation">
        <sequence resource="EMBL-CDS" id="CAO77701"/>
    </conflict>
    <text>Extended N-terminus.</text>
</comment>
<accession>P85207</accession>
<accession>A9JPS7</accession>
<accession>E8PKA3</accession>
<reference key="1">
    <citation type="journal article" date="2008" name="FEMS Microbiol. Lett.">
        <title>A membrane-associated protein with Cr(VI)-reducing activity from Thermus scotoductus SA-01.</title>
        <authorList>
            <person name="Opperman D.J."/>
            <person name="van Heerden E."/>
        </authorList>
    </citation>
    <scope>NUCLEOTIDE SEQUENCE [GENOMIC DNA]</scope>
    <scope>PROTEIN SEQUENCE OF 1-14</scope>
    <scope>FUNCTION</scope>
    <scope>COFACTOR</scope>
    <scope>BIOPHYSICOCHEMICAL PROPERTIES</scope>
    <scope>SUBCELLULAR LOCATION</scope>
    <source>
        <strain>ATCC 700910 / SA-01</strain>
    </source>
</reference>
<reference key="2">
    <citation type="journal article" date="2011" name="BMC Genomics">
        <title>Sequence of the hyperplastic genome of the naturally competent Thermus scotoductus SA-01.</title>
        <authorList>
            <person name="Gounder K."/>
            <person name="Brzuszkiewicz E."/>
            <person name="Liesegang H."/>
            <person name="Wollherr A."/>
            <person name="Daniel R."/>
            <person name="Gottschalk G."/>
            <person name="Reva O."/>
            <person name="Kumwenda B."/>
            <person name="Srivastava M."/>
            <person name="Bricio C."/>
            <person name="Berenguer J."/>
            <person name="van Heerden E."/>
            <person name="Litthauer D."/>
        </authorList>
    </citation>
    <scope>NUCLEOTIDE SEQUENCE [LARGE SCALE GENOMIC DNA]</scope>
    <source>
        <strain>ATCC 700910 / SA-01</strain>
    </source>
</reference>
<feature type="chain" id="PRO_0000315941" description="Dihydrolipoyl dehydrogenase">
    <location>
        <begin position="1"/>
        <end position="461"/>
    </location>
</feature>
<feature type="active site" description="Proton acceptor" evidence="2">
    <location>
        <position position="437"/>
    </location>
</feature>
<feature type="binding site" evidence="2">
    <location>
        <begin position="33"/>
        <end position="41"/>
    </location>
    <ligand>
        <name>FAD</name>
        <dbReference type="ChEBI" id="CHEBI:57692"/>
    </ligand>
</feature>
<feature type="binding site" evidence="1">
    <location>
        <position position="50"/>
    </location>
    <ligand>
        <name>FAD</name>
        <dbReference type="ChEBI" id="CHEBI:57692"/>
    </ligand>
</feature>
<feature type="binding site" evidence="1">
    <location>
        <position position="112"/>
    </location>
    <ligand>
        <name>FAD</name>
        <dbReference type="ChEBI" id="CHEBI:57692"/>
    </ligand>
</feature>
<feature type="binding site" evidence="1">
    <location>
        <begin position="173"/>
        <end position="177"/>
    </location>
    <ligand>
        <name>NAD(+)</name>
        <dbReference type="ChEBI" id="CHEBI:57540"/>
    </ligand>
</feature>
<feature type="binding site" evidence="1">
    <location>
        <position position="196"/>
    </location>
    <ligand>
        <name>NAD(+)</name>
        <dbReference type="ChEBI" id="CHEBI:57540"/>
    </ligand>
</feature>
<feature type="binding site" evidence="1">
    <location>
        <begin position="263"/>
        <end position="266"/>
    </location>
    <ligand>
        <name>NAD(+)</name>
        <dbReference type="ChEBI" id="CHEBI:57540"/>
    </ligand>
</feature>
<feature type="binding site" evidence="1">
    <location>
        <position position="306"/>
    </location>
    <ligand>
        <name>FAD</name>
        <dbReference type="ChEBI" id="CHEBI:57692"/>
    </ligand>
</feature>
<feature type="binding site" evidence="1">
    <location>
        <position position="314"/>
    </location>
    <ligand>
        <name>FAD</name>
        <dbReference type="ChEBI" id="CHEBI:57692"/>
    </ligand>
</feature>
<feature type="disulfide bond" description="Redox-active" evidence="2">
    <location>
        <begin position="41"/>
        <end position="46"/>
    </location>
</feature>
<keyword id="KW-0903">Direct protein sequencing</keyword>
<keyword id="KW-1015">Disulfide bond</keyword>
<keyword id="KW-0274">FAD</keyword>
<keyword id="KW-0285">Flavoprotein</keyword>
<keyword id="KW-0472">Membrane</keyword>
<keyword id="KW-0520">NAD</keyword>
<keyword id="KW-0560">Oxidoreductase</keyword>
<keyword id="KW-0676">Redox-active center</keyword>
<gene>
    <name evidence="6" type="primary">lpd</name>
    <name type="synonym">lpdA1</name>
    <name type="ordered locus">TSC_c02350</name>
</gene>
<name>DLDH_THESS</name>